<dbReference type="EC" id="3.6.1.66" evidence="1"/>
<dbReference type="EMBL" id="AE000513">
    <property type="protein sequence ID" value="AAF09767.1"/>
    <property type="molecule type" value="Genomic_DNA"/>
</dbReference>
<dbReference type="PIR" id="G75550">
    <property type="entry name" value="G75550"/>
</dbReference>
<dbReference type="RefSeq" id="NP_293903.1">
    <property type="nucleotide sequence ID" value="NC_001263.1"/>
</dbReference>
<dbReference type="RefSeq" id="WP_010886825.1">
    <property type="nucleotide sequence ID" value="NC_001263.1"/>
</dbReference>
<dbReference type="SMR" id="Q9RXX6"/>
<dbReference type="FunCoup" id="Q9RXX6">
    <property type="interactions" value="415"/>
</dbReference>
<dbReference type="STRING" id="243230.DR_0179"/>
<dbReference type="PaxDb" id="243230-DR_0179"/>
<dbReference type="EnsemblBacteria" id="AAF09767">
    <property type="protein sequence ID" value="AAF09767"/>
    <property type="gene ID" value="DR_0179"/>
</dbReference>
<dbReference type="GeneID" id="69516410"/>
<dbReference type="KEGG" id="dra:DR_0179"/>
<dbReference type="PATRIC" id="fig|243230.17.peg.343"/>
<dbReference type="eggNOG" id="COG0127">
    <property type="taxonomic scope" value="Bacteria"/>
</dbReference>
<dbReference type="HOGENOM" id="CLU_082080_0_2_0"/>
<dbReference type="InParanoid" id="Q9RXX6"/>
<dbReference type="OrthoDB" id="9807456at2"/>
<dbReference type="BRENDA" id="3.6.1.15">
    <property type="organism ID" value="1856"/>
</dbReference>
<dbReference type="Proteomes" id="UP000002524">
    <property type="component" value="Chromosome 1"/>
</dbReference>
<dbReference type="GO" id="GO:0005737">
    <property type="term" value="C:cytoplasm"/>
    <property type="evidence" value="ECO:0000318"/>
    <property type="project" value="GO_Central"/>
</dbReference>
<dbReference type="GO" id="GO:0005829">
    <property type="term" value="C:cytosol"/>
    <property type="evidence" value="ECO:0000318"/>
    <property type="project" value="GO_Central"/>
</dbReference>
<dbReference type="GO" id="GO:0035870">
    <property type="term" value="F:dITP diphosphatase activity"/>
    <property type="evidence" value="ECO:0007669"/>
    <property type="project" value="RHEA"/>
</dbReference>
<dbReference type="GO" id="GO:0036220">
    <property type="term" value="F:ITP diphosphatase activity"/>
    <property type="evidence" value="ECO:0007669"/>
    <property type="project" value="UniProtKB-EC"/>
</dbReference>
<dbReference type="GO" id="GO:0046872">
    <property type="term" value="F:metal ion binding"/>
    <property type="evidence" value="ECO:0007669"/>
    <property type="project" value="UniProtKB-KW"/>
</dbReference>
<dbReference type="GO" id="GO:0047429">
    <property type="term" value="F:nucleoside triphosphate diphosphatase activity"/>
    <property type="evidence" value="ECO:0000318"/>
    <property type="project" value="GO_Central"/>
</dbReference>
<dbReference type="GO" id="GO:0000166">
    <property type="term" value="F:nucleotide binding"/>
    <property type="evidence" value="ECO:0007669"/>
    <property type="project" value="UniProtKB-KW"/>
</dbReference>
<dbReference type="GO" id="GO:0017111">
    <property type="term" value="F:ribonucleoside triphosphate phosphatase activity"/>
    <property type="evidence" value="ECO:0007669"/>
    <property type="project" value="InterPro"/>
</dbReference>
<dbReference type="GO" id="GO:0036222">
    <property type="term" value="F:XTP diphosphatase activity"/>
    <property type="evidence" value="ECO:0007669"/>
    <property type="project" value="RHEA"/>
</dbReference>
<dbReference type="GO" id="GO:0009143">
    <property type="term" value="P:nucleoside triphosphate catabolic process"/>
    <property type="evidence" value="ECO:0000318"/>
    <property type="project" value="GO_Central"/>
</dbReference>
<dbReference type="GO" id="GO:0009117">
    <property type="term" value="P:nucleotide metabolic process"/>
    <property type="evidence" value="ECO:0007669"/>
    <property type="project" value="UniProtKB-KW"/>
</dbReference>
<dbReference type="GO" id="GO:0009146">
    <property type="term" value="P:purine nucleoside triphosphate catabolic process"/>
    <property type="evidence" value="ECO:0007669"/>
    <property type="project" value="UniProtKB-UniRule"/>
</dbReference>
<dbReference type="CDD" id="cd00515">
    <property type="entry name" value="HAM1"/>
    <property type="match status" value="1"/>
</dbReference>
<dbReference type="FunFam" id="3.90.950.10:FF:000001">
    <property type="entry name" value="dITP/XTP pyrophosphatase"/>
    <property type="match status" value="1"/>
</dbReference>
<dbReference type="Gene3D" id="3.90.950.10">
    <property type="match status" value="1"/>
</dbReference>
<dbReference type="HAMAP" id="MF_01405">
    <property type="entry name" value="Non_canon_purine_NTPase"/>
    <property type="match status" value="1"/>
</dbReference>
<dbReference type="InterPro" id="IPR020922">
    <property type="entry name" value="dITP/XTP_pyrophosphatase"/>
</dbReference>
<dbReference type="InterPro" id="IPR029001">
    <property type="entry name" value="ITPase-like_fam"/>
</dbReference>
<dbReference type="InterPro" id="IPR002637">
    <property type="entry name" value="RdgB/HAM1"/>
</dbReference>
<dbReference type="NCBIfam" id="TIGR00042">
    <property type="entry name" value="RdgB/HAM1 family non-canonical purine NTP pyrophosphatase"/>
    <property type="match status" value="1"/>
</dbReference>
<dbReference type="PANTHER" id="PTHR11067:SF9">
    <property type="entry name" value="INOSINE TRIPHOSPHATE PYROPHOSPHATASE"/>
    <property type="match status" value="1"/>
</dbReference>
<dbReference type="PANTHER" id="PTHR11067">
    <property type="entry name" value="INOSINE TRIPHOSPHATE PYROPHOSPHATASE/HAM1 PROTEIN"/>
    <property type="match status" value="1"/>
</dbReference>
<dbReference type="Pfam" id="PF01725">
    <property type="entry name" value="Ham1p_like"/>
    <property type="match status" value="1"/>
</dbReference>
<dbReference type="SUPFAM" id="SSF52972">
    <property type="entry name" value="ITPase-like"/>
    <property type="match status" value="1"/>
</dbReference>
<accession>Q9RXX6</accession>
<organism>
    <name type="scientific">Deinococcus radiodurans (strain ATCC 13939 / DSM 20539 / JCM 16871 / CCUG 27074 / LMG 4051 / NBRC 15346 / NCIMB 9279 / VKM B-1422 / R1)</name>
    <dbReference type="NCBI Taxonomy" id="243230"/>
    <lineage>
        <taxon>Bacteria</taxon>
        <taxon>Thermotogati</taxon>
        <taxon>Deinococcota</taxon>
        <taxon>Deinococci</taxon>
        <taxon>Deinococcales</taxon>
        <taxon>Deinococcaceae</taxon>
        <taxon>Deinococcus</taxon>
    </lineage>
</organism>
<protein>
    <recommendedName>
        <fullName evidence="1">dITP/XTP pyrophosphatase</fullName>
        <ecNumber evidence="1">3.6.1.66</ecNumber>
    </recommendedName>
    <alternativeName>
        <fullName evidence="1">Non-canonical purine NTP pyrophosphatase</fullName>
    </alternativeName>
    <alternativeName>
        <fullName evidence="1">Non-standard purine NTP pyrophosphatase</fullName>
    </alternativeName>
    <alternativeName>
        <fullName evidence="1">Nucleoside-triphosphate diphosphatase</fullName>
    </alternativeName>
    <alternativeName>
        <fullName evidence="1">Nucleoside-triphosphate pyrophosphatase</fullName>
        <shortName evidence="1">NTPase</shortName>
    </alternativeName>
</protein>
<keyword id="KW-0378">Hydrolase</keyword>
<keyword id="KW-0460">Magnesium</keyword>
<keyword id="KW-0479">Metal-binding</keyword>
<keyword id="KW-0546">Nucleotide metabolism</keyword>
<keyword id="KW-0547">Nucleotide-binding</keyword>
<keyword id="KW-1185">Reference proteome</keyword>
<gene>
    <name type="ordered locus">DR_0179</name>
</gene>
<proteinExistence type="inferred from homology"/>
<name>IXTPA_DEIRA</name>
<reference key="1">
    <citation type="journal article" date="1999" name="Science">
        <title>Genome sequence of the radioresistant bacterium Deinococcus radiodurans R1.</title>
        <authorList>
            <person name="White O."/>
            <person name="Eisen J.A."/>
            <person name="Heidelberg J.F."/>
            <person name="Hickey E.K."/>
            <person name="Peterson J.D."/>
            <person name="Dodson R.J."/>
            <person name="Haft D.H."/>
            <person name="Gwinn M.L."/>
            <person name="Nelson W.C."/>
            <person name="Richardson D.L."/>
            <person name="Moffat K.S."/>
            <person name="Qin H."/>
            <person name="Jiang L."/>
            <person name="Pamphile W."/>
            <person name="Crosby M."/>
            <person name="Shen M."/>
            <person name="Vamathevan J.J."/>
            <person name="Lam P."/>
            <person name="McDonald L.A."/>
            <person name="Utterback T.R."/>
            <person name="Zalewski C."/>
            <person name="Makarova K.S."/>
            <person name="Aravind L."/>
            <person name="Daly M.J."/>
            <person name="Minton K.W."/>
            <person name="Fleischmann R.D."/>
            <person name="Ketchum K.A."/>
            <person name="Nelson K.E."/>
            <person name="Salzberg S.L."/>
            <person name="Smith H.O."/>
            <person name="Venter J.C."/>
            <person name="Fraser C.M."/>
        </authorList>
    </citation>
    <scope>NUCLEOTIDE SEQUENCE [LARGE SCALE GENOMIC DNA]</scope>
    <source>
        <strain>ATCC 13939 / DSM 20539 / JCM 16871 / CCUG 27074 / LMG 4051 / NBRC 15346 / NCIMB 9279 / VKM B-1422 / R1</strain>
    </source>
</reference>
<comment type="function">
    <text evidence="1">Pyrophosphatase that catalyzes the hydrolysis of nucleoside triphosphates to their monophosphate derivatives, with a high preference for the non-canonical purine nucleotides XTP (xanthosine triphosphate), dITP (deoxyinosine triphosphate) and ITP. Seems to function as a house-cleaning enzyme that removes non-canonical purine nucleotides from the nucleotide pool, thus preventing their incorporation into DNA/RNA and avoiding chromosomal lesions.</text>
</comment>
<comment type="catalytic activity">
    <reaction evidence="1">
        <text>XTP + H2O = XMP + diphosphate + H(+)</text>
        <dbReference type="Rhea" id="RHEA:28610"/>
        <dbReference type="ChEBI" id="CHEBI:15377"/>
        <dbReference type="ChEBI" id="CHEBI:15378"/>
        <dbReference type="ChEBI" id="CHEBI:33019"/>
        <dbReference type="ChEBI" id="CHEBI:57464"/>
        <dbReference type="ChEBI" id="CHEBI:61314"/>
        <dbReference type="EC" id="3.6.1.66"/>
    </reaction>
</comment>
<comment type="catalytic activity">
    <reaction evidence="1">
        <text>dITP + H2O = dIMP + diphosphate + H(+)</text>
        <dbReference type="Rhea" id="RHEA:28342"/>
        <dbReference type="ChEBI" id="CHEBI:15377"/>
        <dbReference type="ChEBI" id="CHEBI:15378"/>
        <dbReference type="ChEBI" id="CHEBI:33019"/>
        <dbReference type="ChEBI" id="CHEBI:61194"/>
        <dbReference type="ChEBI" id="CHEBI:61382"/>
        <dbReference type="EC" id="3.6.1.66"/>
    </reaction>
</comment>
<comment type="catalytic activity">
    <reaction evidence="1">
        <text>ITP + H2O = IMP + diphosphate + H(+)</text>
        <dbReference type="Rhea" id="RHEA:29399"/>
        <dbReference type="ChEBI" id="CHEBI:15377"/>
        <dbReference type="ChEBI" id="CHEBI:15378"/>
        <dbReference type="ChEBI" id="CHEBI:33019"/>
        <dbReference type="ChEBI" id="CHEBI:58053"/>
        <dbReference type="ChEBI" id="CHEBI:61402"/>
        <dbReference type="EC" id="3.6.1.66"/>
    </reaction>
</comment>
<comment type="cofactor">
    <cofactor evidence="1">
        <name>Mg(2+)</name>
        <dbReference type="ChEBI" id="CHEBI:18420"/>
    </cofactor>
    <text evidence="1">Binds 1 Mg(2+) ion per subunit.</text>
</comment>
<comment type="subunit">
    <text evidence="1">Homodimer.</text>
</comment>
<comment type="similarity">
    <text evidence="1">Belongs to the HAM1 NTPase family.</text>
</comment>
<sequence>MQQQTGGRRRQIRRVVVATSNAGKVRELQGALAPLGWQCEGLGAVTLPEETGSTYEENAALKACAAAMATGLPALADDSGIEVLALGGQPGVYSARFGNVNSDVERNVLLLEKMRRHTDRRAKFVSVLVLAYPDGKLEEYRGEVTGQLLEGPRGESGFGYDPLFLPDGSELSMGEMTLEQKQAISHRGQALAALLAAHGA</sequence>
<evidence type="ECO:0000255" key="1">
    <source>
        <dbReference type="HAMAP-Rule" id="MF_01405"/>
    </source>
</evidence>
<feature type="chain" id="PRO_0000178163" description="dITP/XTP pyrophosphatase">
    <location>
        <begin position="1"/>
        <end position="200"/>
    </location>
</feature>
<feature type="active site" description="Proton acceptor" evidence="1">
    <location>
        <position position="78"/>
    </location>
</feature>
<feature type="binding site" evidence="1">
    <location>
        <begin position="19"/>
        <end position="24"/>
    </location>
    <ligand>
        <name>substrate</name>
    </ligand>
</feature>
<feature type="binding site" evidence="1">
    <location>
        <position position="49"/>
    </location>
    <ligand>
        <name>Mg(2+)</name>
        <dbReference type="ChEBI" id="CHEBI:18420"/>
    </ligand>
</feature>
<feature type="binding site" evidence="1">
    <location>
        <position position="78"/>
    </location>
    <ligand>
        <name>Mg(2+)</name>
        <dbReference type="ChEBI" id="CHEBI:18420"/>
    </ligand>
</feature>
<feature type="binding site" evidence="1">
    <location>
        <position position="79"/>
    </location>
    <ligand>
        <name>substrate</name>
    </ligand>
</feature>
<feature type="binding site" evidence="1">
    <location>
        <begin position="158"/>
        <end position="161"/>
    </location>
    <ligand>
        <name>substrate</name>
    </ligand>
</feature>
<feature type="binding site" evidence="1">
    <location>
        <position position="181"/>
    </location>
    <ligand>
        <name>substrate</name>
    </ligand>
</feature>
<feature type="binding site" evidence="1">
    <location>
        <begin position="186"/>
        <end position="187"/>
    </location>
    <ligand>
        <name>substrate</name>
    </ligand>
</feature>